<comment type="function">
    <text evidence="5">Catalyzes the interconversion of serine and glycine with the conversion of tetrahydrofolate (THF) into 5,10-methylene-THF.</text>
</comment>
<comment type="catalytic activity">
    <reaction evidence="5">
        <text>(6R)-5,10-methylene-5,6,7,8-tetrahydrofolate + glycine + H2O = (6S)-5,6,7,8-tetrahydrofolate + L-serine</text>
        <dbReference type="Rhea" id="RHEA:15481"/>
        <dbReference type="ChEBI" id="CHEBI:15377"/>
        <dbReference type="ChEBI" id="CHEBI:15636"/>
        <dbReference type="ChEBI" id="CHEBI:33384"/>
        <dbReference type="ChEBI" id="CHEBI:57305"/>
        <dbReference type="ChEBI" id="CHEBI:57453"/>
        <dbReference type="EC" id="2.1.2.1"/>
    </reaction>
</comment>
<comment type="cofactor">
    <cofactor evidence="5">
        <name>pyridoxal 5'-phosphate</name>
        <dbReference type="ChEBI" id="CHEBI:597326"/>
    </cofactor>
</comment>
<comment type="activity regulation">
    <text evidence="5">Inhibited by the antifolate drugs methotrexate and pemetrexed.</text>
</comment>
<comment type="biophysicochemical properties">
    <kinetics>
        <KM evidence="5">2.56 mM for L-serine (at pH 6.5 and 30 degrees Celsius)</KM>
        <KM evidence="5">0.54 mM for L-serine (at pH 7.0 and 30 degrees Celsius)</KM>
        <KM evidence="5">0.3 mM for L-serine (at pH 8.0 and 30 degrees Celsius)</KM>
        <KM evidence="5">0.24 mM for L-serine (at pH 8.5 and 30 degrees Celsius)</KM>
        <KM evidence="5">0.2 mM for L-serine (at pH 9.5 and 30 degrees Celsius)</KM>
        <KM evidence="5">7.87 uM for (6S)-5,6,7,8-tetrahydrofolate (at pH 6.5 and 30 degrees Celsius)</KM>
        <KM evidence="5">14.97 uM for (6S)-5,6,7,8-tetrahydrofolate (at pH 7.0 and 30 degrees Celsius)</KM>
        <KM evidence="5">23.83 uM for (6S)-5,6,7,8-tetrahydrofolate (at pH 8.0 and 30 degrees Celsius)</KM>
        <KM evidence="5">33.75 uM for (6S)-5,6,7,8-tetrahydrofolate (at pH 8.5 and 30 degrees Celsius)</KM>
        <KM evidence="5">49.24 uM for (6S)-5,6,7,8-tetrahydrofolate (at pH 9.5 and 30 degrees Celsius)</KM>
    </kinetics>
</comment>
<comment type="pathway">
    <text evidence="8">One-carbon metabolism; tetrahydrofolate interconversion.</text>
</comment>
<comment type="subunit">
    <text evidence="4 5">Homotetramer (PubMed:31873125). Interacts with UBP16 (PubMed:23232097).</text>
</comment>
<comment type="interaction">
    <interactant intactId="EBI-6589432">
        <id>O23254</id>
    </interactant>
    <interactant intactId="EBI-6589403">
        <id>Q9SB51</id>
        <label>UBP16</label>
    </interactant>
    <organismsDiffer>false</organismsDiffer>
    <experiments>3</experiments>
</comment>
<comment type="subcellular location">
    <subcellularLocation>
        <location evidence="8">Cytoplasm</location>
    </subcellularLocation>
</comment>
<comment type="tissue specificity">
    <text evidence="3">Mostly expressed in flowers, less abundant in roots, inflorescence stems, and siliques, and barely detectable in leaves.</text>
</comment>
<comment type="induction">
    <text evidence="3">Circadian-regulation.</text>
</comment>
<comment type="similarity">
    <text evidence="8">Belongs to the SHMT family.</text>
</comment>
<name>GLYC4_ARATH</name>
<gene>
    <name evidence="6" type="primary">SHM4</name>
    <name evidence="7" type="synonym">SHMT4</name>
    <name evidence="9" type="ordered locus">At4g13930</name>
    <name evidence="10" type="ORF">dl3005c</name>
    <name evidence="11" type="ORF">FCAALL.160</name>
</gene>
<feature type="chain" id="PRO_0000422349" description="Serine hydroxymethyltransferase 4">
    <location>
        <begin position="1"/>
        <end position="471"/>
    </location>
</feature>
<feature type="binding site" evidence="2">
    <location>
        <position position="39"/>
    </location>
    <ligand>
        <name>L-serine</name>
        <dbReference type="ChEBI" id="CHEBI:33384"/>
    </ligand>
</feature>
<feature type="binding site" evidence="5 12">
    <location>
        <position position="39"/>
    </location>
    <ligand>
        <name>pemetrexed</name>
        <dbReference type="ChEBI" id="CHEBI:63724"/>
    </ligand>
</feature>
<feature type="binding site" evidence="5 12">
    <location>
        <position position="59"/>
    </location>
    <ligand>
        <name>pemetrexed</name>
        <dbReference type="ChEBI" id="CHEBI:63724"/>
    </ligand>
</feature>
<feature type="binding site" evidence="2">
    <location>
        <position position="61"/>
    </location>
    <ligand>
        <name>L-serine</name>
        <dbReference type="ChEBI" id="CHEBI:33384"/>
    </ligand>
</feature>
<feature type="binding site" evidence="5 12">
    <location>
        <position position="61"/>
    </location>
    <ligand>
        <name>pemetrexed</name>
        <dbReference type="ChEBI" id="CHEBI:63724"/>
    </ligand>
</feature>
<feature type="binding site" evidence="2">
    <location>
        <position position="69"/>
    </location>
    <ligand>
        <name>L-serine</name>
        <dbReference type="ChEBI" id="CHEBI:33384"/>
    </ligand>
</feature>
<feature type="binding site" evidence="5 12">
    <location>
        <begin position="105"/>
        <end position="107"/>
    </location>
    <ligand>
        <name>pemetrexed</name>
        <dbReference type="ChEBI" id="CHEBI:63724"/>
    </ligand>
</feature>
<feature type="binding site" evidence="5 12">
    <location>
        <position position="134"/>
    </location>
    <ligand>
        <name>pemetrexed</name>
        <dbReference type="ChEBI" id="CHEBI:63724"/>
    </ligand>
</feature>
<feature type="binding site" evidence="5 12">
    <location>
        <position position="190"/>
    </location>
    <ligand>
        <name>pemetrexed</name>
        <dbReference type="ChEBI" id="CHEBI:63724"/>
    </ligand>
</feature>
<feature type="binding site" evidence="2">
    <location>
        <position position="218"/>
    </location>
    <ligand>
        <name>L-serine</name>
        <dbReference type="ChEBI" id="CHEBI:33384"/>
    </ligand>
</feature>
<feature type="binding site" evidence="5 12">
    <location>
        <position position="218"/>
    </location>
    <ligand>
        <name>pemetrexed</name>
        <dbReference type="ChEBI" id="CHEBI:63724"/>
    </ligand>
</feature>
<feature type="binding site" evidence="2">
    <location>
        <position position="244"/>
    </location>
    <ligand>
        <name>L-serine</name>
        <dbReference type="ChEBI" id="CHEBI:33384"/>
    </ligand>
</feature>
<feature type="binding site" evidence="5 12">
    <location>
        <position position="290"/>
    </location>
    <ligand>
        <name>pemetrexed</name>
        <dbReference type="ChEBI" id="CHEBI:63724"/>
    </ligand>
</feature>
<feature type="binding site" evidence="5 12">
    <location>
        <position position="373"/>
    </location>
    <ligand>
        <name>methotrexate</name>
        <dbReference type="ChEBI" id="CHEBI:50681"/>
    </ligand>
</feature>
<feature type="binding site" evidence="2">
    <location>
        <position position="389"/>
    </location>
    <ligand>
        <name>L-serine</name>
        <dbReference type="ChEBI" id="CHEBI:33384"/>
    </ligand>
</feature>
<feature type="binding site" evidence="5 12">
    <location>
        <position position="389"/>
    </location>
    <ligand>
        <name>pemetrexed</name>
        <dbReference type="ChEBI" id="CHEBI:63724"/>
    </ligand>
</feature>
<feature type="modified residue" description="N-acetylmethionine" evidence="13">
    <location>
        <position position="1"/>
    </location>
</feature>
<feature type="modified residue" description="N6-(pyridoxal phosphate)lysine" evidence="1">
    <location>
        <position position="244"/>
    </location>
</feature>
<feature type="sequence conflict" description="In Ref. 4; AAG40343." evidence="8" ref="4">
    <original>S</original>
    <variation>R</variation>
    <location>
        <position position="53"/>
    </location>
</feature>
<feature type="sequence conflict" description="In Ref. 4; AAG40343." evidence="8" ref="4">
    <original>S</original>
    <variation>P</variation>
    <location>
        <position position="84"/>
    </location>
</feature>
<feature type="sequence conflict" description="In Ref. 5; AAM64493." evidence="8" ref="5">
    <original>I</original>
    <variation>T</variation>
    <location>
        <position position="147"/>
    </location>
</feature>
<feature type="sequence conflict" description="In Ref. 5; AAM64493." evidence="8" ref="5">
    <original>K</original>
    <variation>Q</variation>
    <location>
        <position position="470"/>
    </location>
</feature>
<feature type="helix" evidence="15">
    <location>
        <begin position="4"/>
        <end position="8"/>
    </location>
</feature>
<feature type="helix" evidence="15">
    <location>
        <begin position="12"/>
        <end position="15"/>
    </location>
</feature>
<feature type="helix" evidence="15">
    <location>
        <begin position="17"/>
        <end position="32"/>
    </location>
</feature>
<feature type="strand" evidence="15">
    <location>
        <begin position="33"/>
        <end position="35"/>
    </location>
</feature>
<feature type="helix" evidence="15">
    <location>
        <begin position="45"/>
        <end position="51"/>
    </location>
</feature>
<feature type="helix" evidence="15">
    <location>
        <begin position="54"/>
        <end position="57"/>
    </location>
</feature>
<feature type="strand" evidence="15">
    <location>
        <begin position="66"/>
        <end position="70"/>
    </location>
</feature>
<feature type="helix" evidence="15">
    <location>
        <begin position="73"/>
        <end position="89"/>
    </location>
</feature>
<feature type="turn" evidence="15">
    <location>
        <begin position="94"/>
        <end position="96"/>
    </location>
</feature>
<feature type="strand" evidence="15">
    <location>
        <begin position="97"/>
        <end position="100"/>
    </location>
</feature>
<feature type="helix" evidence="15">
    <location>
        <begin position="106"/>
        <end position="117"/>
    </location>
</feature>
<feature type="strand" evidence="15">
    <location>
        <begin position="123"/>
        <end position="127"/>
    </location>
</feature>
<feature type="helix" evidence="15">
    <location>
        <begin position="129"/>
        <end position="131"/>
    </location>
</feature>
<feature type="helix" evidence="15">
    <location>
        <begin position="135"/>
        <end position="137"/>
    </location>
</feature>
<feature type="helix" evidence="15">
    <location>
        <begin position="149"/>
        <end position="153"/>
    </location>
</feature>
<feature type="strand" evidence="15">
    <location>
        <begin position="154"/>
        <end position="159"/>
    </location>
</feature>
<feature type="turn" evidence="15">
    <location>
        <begin position="163"/>
        <end position="165"/>
    </location>
</feature>
<feature type="helix" evidence="15">
    <location>
        <begin position="170"/>
        <end position="180"/>
    </location>
</feature>
<feature type="strand" evidence="15">
    <location>
        <begin position="183"/>
        <end position="187"/>
    </location>
</feature>
<feature type="helix" evidence="15">
    <location>
        <begin position="198"/>
        <end position="208"/>
    </location>
</feature>
<feature type="strand" evidence="15">
    <location>
        <begin position="211"/>
        <end position="215"/>
    </location>
</feature>
<feature type="helix" evidence="15">
    <location>
        <begin position="217"/>
        <end position="219"/>
    </location>
</feature>
<feature type="helix" evidence="15">
    <location>
        <begin position="220"/>
        <end position="224"/>
    </location>
</feature>
<feature type="helix" evidence="15">
    <location>
        <begin position="231"/>
        <end position="233"/>
    </location>
</feature>
<feature type="strand" evidence="15">
    <location>
        <begin position="236"/>
        <end position="241"/>
    </location>
</feature>
<feature type="strand" evidence="15">
    <location>
        <begin position="252"/>
        <end position="257"/>
    </location>
</feature>
<feature type="strand" evidence="14">
    <location>
        <begin position="272"/>
        <end position="274"/>
    </location>
</feature>
<feature type="helix" evidence="15">
    <location>
        <begin position="276"/>
        <end position="283"/>
    </location>
</feature>
<feature type="turn" evidence="15">
    <location>
        <begin position="284"/>
        <end position="287"/>
    </location>
</feature>
<feature type="helix" evidence="15">
    <location>
        <begin position="293"/>
        <end position="306"/>
    </location>
</feature>
<feature type="helix" evidence="15">
    <location>
        <begin position="309"/>
        <end position="331"/>
    </location>
</feature>
<feature type="helix" evidence="15">
    <location>
        <begin position="337"/>
        <end position="339"/>
    </location>
</feature>
<feature type="strand" evidence="15">
    <location>
        <begin position="342"/>
        <end position="349"/>
    </location>
</feature>
<feature type="helix" evidence="15">
    <location>
        <begin position="351"/>
        <end position="353"/>
    </location>
</feature>
<feature type="helix" evidence="15">
    <location>
        <begin position="357"/>
        <end position="366"/>
    </location>
</feature>
<feature type="strand" evidence="15">
    <location>
        <begin position="372"/>
        <end position="374"/>
    </location>
</feature>
<feature type="strand" evidence="15">
    <location>
        <begin position="381"/>
        <end position="384"/>
    </location>
</feature>
<feature type="strand" evidence="15">
    <location>
        <begin position="387"/>
        <end position="392"/>
    </location>
</feature>
<feature type="helix" evidence="15">
    <location>
        <begin position="393"/>
        <end position="397"/>
    </location>
</feature>
<feature type="helix" evidence="15">
    <location>
        <begin position="402"/>
        <end position="426"/>
    </location>
</feature>
<feature type="helix" evidence="15">
    <location>
        <begin position="430"/>
        <end position="433"/>
    </location>
</feature>
<feature type="helix" evidence="15">
    <location>
        <begin position="434"/>
        <end position="437"/>
    </location>
</feature>
<feature type="helix" evidence="15">
    <location>
        <begin position="441"/>
        <end position="455"/>
    </location>
</feature>
<feature type="strand" evidence="15">
    <location>
        <begin position="460"/>
        <end position="462"/>
    </location>
</feature>
<feature type="helix" evidence="15">
    <location>
        <begin position="464"/>
        <end position="466"/>
    </location>
</feature>
<sequence>MEPVSSWGNTSLVSVDPEIHDLIEKEKRRQCRGIELIASENFTSFAVIEALGSALTNKYSEGIPGNRYYGGNEFIDEIENLCRSRALEAFHCDPAAWGVNVQPYSGSPANFAAYTALLQPHDRIMGLDLPSGGHLTHGYYTSGGKKISATSIYFESLPYKVNFTTGYIDYDKLEEKALDFRPKLLICGGSAYPRDWDYARFRAIADKVGALLLCDMAHISGLVAAQEAANPFEYCDVVTTTTHKSLRGPRAGMIFYRKGPKPPKKGQPEGAVYDFEDKINFAVFPALQGGPHNHQIGALAVALKQANTPGFKVYAKQVKANAVALGNYLMSKGYQIVTNGTENHLVLWDLRPLGLTGNKVEKLCDLCSITLNKNAVFGDSSALAPGGVRIGAPAMTSRGLVEKDFEQIGEFLSRAVTLTLDIQKTYGKLLKDFNKGLVNNKDLDQLKADVEKFSASYEMPGFLMSEMKYKD</sequence>
<reference key="1">
    <citation type="journal article" date="1998" name="Nature">
        <title>Analysis of 1.9 Mb of contiguous sequence from chromosome 4 of Arabidopsis thaliana.</title>
        <authorList>
            <person name="Bevan M."/>
            <person name="Bancroft I."/>
            <person name="Bent E."/>
            <person name="Love K."/>
            <person name="Goodman H.M."/>
            <person name="Dean C."/>
            <person name="Bergkamp R."/>
            <person name="Dirkse W."/>
            <person name="van Staveren M."/>
            <person name="Stiekema W."/>
            <person name="Drost L."/>
            <person name="Ridley P."/>
            <person name="Hudson S.-A."/>
            <person name="Patel K."/>
            <person name="Murphy G."/>
            <person name="Piffanelli P."/>
            <person name="Wedler H."/>
            <person name="Wedler E."/>
            <person name="Wambutt R."/>
            <person name="Weitzenegger T."/>
            <person name="Pohl T."/>
            <person name="Terryn N."/>
            <person name="Gielen J."/>
            <person name="Villarroel R."/>
            <person name="De Clercq R."/>
            <person name="van Montagu M."/>
            <person name="Lecharny A."/>
            <person name="Aubourg S."/>
            <person name="Gy I."/>
            <person name="Kreis M."/>
            <person name="Lao N."/>
            <person name="Kavanagh T."/>
            <person name="Hempel S."/>
            <person name="Kotter P."/>
            <person name="Entian K.-D."/>
            <person name="Rieger M."/>
            <person name="Schaefer M."/>
            <person name="Funk B."/>
            <person name="Mueller-Auer S."/>
            <person name="Silvey M."/>
            <person name="James R."/>
            <person name="Monfort A."/>
            <person name="Pons A."/>
            <person name="Puigdomenech P."/>
            <person name="Douka A."/>
            <person name="Voukelatou E."/>
            <person name="Milioni D."/>
            <person name="Hatzopoulos P."/>
            <person name="Piravandi E."/>
            <person name="Obermaier B."/>
            <person name="Hilbert H."/>
            <person name="Duesterhoeft A."/>
            <person name="Moores T."/>
            <person name="Jones J.D.G."/>
            <person name="Eneva T."/>
            <person name="Palme K."/>
            <person name="Benes V."/>
            <person name="Rechmann S."/>
            <person name="Ansorge W."/>
            <person name="Cooke R."/>
            <person name="Berger C."/>
            <person name="Delseny M."/>
            <person name="Voet M."/>
            <person name="Volckaert G."/>
            <person name="Mewes H.-W."/>
            <person name="Klosterman S."/>
            <person name="Schueller C."/>
            <person name="Chalwatzis N."/>
        </authorList>
    </citation>
    <scope>NUCLEOTIDE SEQUENCE [LARGE SCALE GENOMIC DNA]</scope>
    <source>
        <strain>cv. Columbia</strain>
    </source>
</reference>
<reference key="2">
    <citation type="journal article" date="1999" name="Nature">
        <title>Sequence and analysis of chromosome 4 of the plant Arabidopsis thaliana.</title>
        <authorList>
            <person name="Mayer K.F.X."/>
            <person name="Schueller C."/>
            <person name="Wambutt R."/>
            <person name="Murphy G."/>
            <person name="Volckaert G."/>
            <person name="Pohl T."/>
            <person name="Duesterhoeft A."/>
            <person name="Stiekema W."/>
            <person name="Entian K.-D."/>
            <person name="Terryn N."/>
            <person name="Harris B."/>
            <person name="Ansorge W."/>
            <person name="Brandt P."/>
            <person name="Grivell L.A."/>
            <person name="Rieger M."/>
            <person name="Weichselgartner M."/>
            <person name="de Simone V."/>
            <person name="Obermaier B."/>
            <person name="Mache R."/>
            <person name="Mueller M."/>
            <person name="Kreis M."/>
            <person name="Delseny M."/>
            <person name="Puigdomenech P."/>
            <person name="Watson M."/>
            <person name="Schmidtheini T."/>
            <person name="Reichert B."/>
            <person name="Portetelle D."/>
            <person name="Perez-Alonso M."/>
            <person name="Boutry M."/>
            <person name="Bancroft I."/>
            <person name="Vos P."/>
            <person name="Hoheisel J."/>
            <person name="Zimmermann W."/>
            <person name="Wedler H."/>
            <person name="Ridley P."/>
            <person name="Langham S.-A."/>
            <person name="McCullagh B."/>
            <person name="Bilham L."/>
            <person name="Robben J."/>
            <person name="van der Schueren J."/>
            <person name="Grymonprez B."/>
            <person name="Chuang Y.-J."/>
            <person name="Vandenbussche F."/>
            <person name="Braeken M."/>
            <person name="Weltjens I."/>
            <person name="Voet M."/>
            <person name="Bastiaens I."/>
            <person name="Aert R."/>
            <person name="Defoor E."/>
            <person name="Weitzenegger T."/>
            <person name="Bothe G."/>
            <person name="Ramsperger U."/>
            <person name="Hilbert H."/>
            <person name="Braun M."/>
            <person name="Holzer E."/>
            <person name="Brandt A."/>
            <person name="Peters S."/>
            <person name="van Staveren M."/>
            <person name="Dirkse W."/>
            <person name="Mooijman P."/>
            <person name="Klein Lankhorst R."/>
            <person name="Rose M."/>
            <person name="Hauf J."/>
            <person name="Koetter P."/>
            <person name="Berneiser S."/>
            <person name="Hempel S."/>
            <person name="Feldpausch M."/>
            <person name="Lamberth S."/>
            <person name="Van den Daele H."/>
            <person name="De Keyser A."/>
            <person name="Buysshaert C."/>
            <person name="Gielen J."/>
            <person name="Villarroel R."/>
            <person name="De Clercq R."/>
            <person name="van Montagu M."/>
            <person name="Rogers J."/>
            <person name="Cronin A."/>
            <person name="Quail M.A."/>
            <person name="Bray-Allen S."/>
            <person name="Clark L."/>
            <person name="Doggett J."/>
            <person name="Hall S."/>
            <person name="Kay M."/>
            <person name="Lennard N."/>
            <person name="McLay K."/>
            <person name="Mayes R."/>
            <person name="Pettett A."/>
            <person name="Rajandream M.A."/>
            <person name="Lyne M."/>
            <person name="Benes V."/>
            <person name="Rechmann S."/>
            <person name="Borkova D."/>
            <person name="Bloecker H."/>
            <person name="Scharfe M."/>
            <person name="Grimm M."/>
            <person name="Loehnert T.-H."/>
            <person name="Dose S."/>
            <person name="de Haan M."/>
            <person name="Maarse A.C."/>
            <person name="Schaefer M."/>
            <person name="Mueller-Auer S."/>
            <person name="Gabel C."/>
            <person name="Fuchs M."/>
            <person name="Fartmann B."/>
            <person name="Granderath K."/>
            <person name="Dauner D."/>
            <person name="Herzl A."/>
            <person name="Neumann S."/>
            <person name="Argiriou A."/>
            <person name="Vitale D."/>
            <person name="Liguori R."/>
            <person name="Piravandi E."/>
            <person name="Massenet O."/>
            <person name="Quigley F."/>
            <person name="Clabauld G."/>
            <person name="Muendlein A."/>
            <person name="Felber R."/>
            <person name="Schnabl S."/>
            <person name="Hiller R."/>
            <person name="Schmidt W."/>
            <person name="Lecharny A."/>
            <person name="Aubourg S."/>
            <person name="Chefdor F."/>
            <person name="Cooke R."/>
            <person name="Berger C."/>
            <person name="Monfort A."/>
            <person name="Casacuberta E."/>
            <person name="Gibbons T."/>
            <person name="Weber N."/>
            <person name="Vandenbol M."/>
            <person name="Bargues M."/>
            <person name="Terol J."/>
            <person name="Torres A."/>
            <person name="Perez-Perez A."/>
            <person name="Purnelle B."/>
            <person name="Bent E."/>
            <person name="Johnson S."/>
            <person name="Tacon D."/>
            <person name="Jesse T."/>
            <person name="Heijnen L."/>
            <person name="Schwarz S."/>
            <person name="Scholler P."/>
            <person name="Heber S."/>
            <person name="Francs P."/>
            <person name="Bielke C."/>
            <person name="Frishman D."/>
            <person name="Haase D."/>
            <person name="Lemcke K."/>
            <person name="Mewes H.-W."/>
            <person name="Stocker S."/>
            <person name="Zaccaria P."/>
            <person name="Bevan M."/>
            <person name="Wilson R.K."/>
            <person name="de la Bastide M."/>
            <person name="Habermann K."/>
            <person name="Parnell L."/>
            <person name="Dedhia N."/>
            <person name="Gnoj L."/>
            <person name="Schutz K."/>
            <person name="Huang E."/>
            <person name="Spiegel L."/>
            <person name="Sekhon M."/>
            <person name="Murray J."/>
            <person name="Sheet P."/>
            <person name="Cordes M."/>
            <person name="Abu-Threideh J."/>
            <person name="Stoneking T."/>
            <person name="Kalicki J."/>
            <person name="Graves T."/>
            <person name="Harmon G."/>
            <person name="Edwards J."/>
            <person name="Latreille P."/>
            <person name="Courtney L."/>
            <person name="Cloud J."/>
            <person name="Abbott A."/>
            <person name="Scott K."/>
            <person name="Johnson D."/>
            <person name="Minx P."/>
            <person name="Bentley D."/>
            <person name="Fulton B."/>
            <person name="Miller N."/>
            <person name="Greco T."/>
            <person name="Kemp K."/>
            <person name="Kramer J."/>
            <person name="Fulton L."/>
            <person name="Mardis E."/>
            <person name="Dante M."/>
            <person name="Pepin K."/>
            <person name="Hillier L.W."/>
            <person name="Nelson J."/>
            <person name="Spieth J."/>
            <person name="Ryan E."/>
            <person name="Andrews S."/>
            <person name="Geisel C."/>
            <person name="Layman D."/>
            <person name="Du H."/>
            <person name="Ali J."/>
            <person name="Berghoff A."/>
            <person name="Jones K."/>
            <person name="Drone K."/>
            <person name="Cotton M."/>
            <person name="Joshu C."/>
            <person name="Antonoiu B."/>
            <person name="Zidanic M."/>
            <person name="Strong C."/>
            <person name="Sun H."/>
            <person name="Lamar B."/>
            <person name="Yordan C."/>
            <person name="Ma P."/>
            <person name="Zhong J."/>
            <person name="Preston R."/>
            <person name="Vil D."/>
            <person name="Shekher M."/>
            <person name="Matero A."/>
            <person name="Shah R."/>
            <person name="Swaby I.K."/>
            <person name="O'Shaughnessy A."/>
            <person name="Rodriguez M."/>
            <person name="Hoffman J."/>
            <person name="Till S."/>
            <person name="Granat S."/>
            <person name="Shohdy N."/>
            <person name="Hasegawa A."/>
            <person name="Hameed A."/>
            <person name="Lodhi M."/>
            <person name="Johnson A."/>
            <person name="Chen E."/>
            <person name="Marra M.A."/>
            <person name="Martienssen R."/>
            <person name="McCombie W.R."/>
        </authorList>
    </citation>
    <scope>NUCLEOTIDE SEQUENCE [LARGE SCALE GENOMIC DNA]</scope>
    <source>
        <strain>cv. Columbia</strain>
    </source>
</reference>
<reference key="3">
    <citation type="journal article" date="2017" name="Plant J.">
        <title>Araport11: a complete reannotation of the Arabidopsis thaliana reference genome.</title>
        <authorList>
            <person name="Cheng C.Y."/>
            <person name="Krishnakumar V."/>
            <person name="Chan A.P."/>
            <person name="Thibaud-Nissen F."/>
            <person name="Schobel S."/>
            <person name="Town C.D."/>
        </authorList>
    </citation>
    <scope>GENOME REANNOTATION</scope>
    <source>
        <strain>cv. Columbia</strain>
    </source>
</reference>
<reference key="4">
    <citation type="journal article" date="2003" name="Science">
        <title>Empirical analysis of transcriptional activity in the Arabidopsis genome.</title>
        <authorList>
            <person name="Yamada K."/>
            <person name="Lim J."/>
            <person name="Dale J.M."/>
            <person name="Chen H."/>
            <person name="Shinn P."/>
            <person name="Palm C.J."/>
            <person name="Southwick A.M."/>
            <person name="Wu H.C."/>
            <person name="Kim C.J."/>
            <person name="Nguyen M."/>
            <person name="Pham P.K."/>
            <person name="Cheuk R.F."/>
            <person name="Karlin-Newmann G."/>
            <person name="Liu S.X."/>
            <person name="Lam B."/>
            <person name="Sakano H."/>
            <person name="Wu T."/>
            <person name="Yu G."/>
            <person name="Miranda M."/>
            <person name="Quach H.L."/>
            <person name="Tripp M."/>
            <person name="Chang C.H."/>
            <person name="Lee J.M."/>
            <person name="Toriumi M.J."/>
            <person name="Chan M.M."/>
            <person name="Tang C.C."/>
            <person name="Onodera C.S."/>
            <person name="Deng J.M."/>
            <person name="Akiyama K."/>
            <person name="Ansari Y."/>
            <person name="Arakawa T."/>
            <person name="Banh J."/>
            <person name="Banno F."/>
            <person name="Bowser L."/>
            <person name="Brooks S.Y."/>
            <person name="Carninci P."/>
            <person name="Chao Q."/>
            <person name="Choy N."/>
            <person name="Enju A."/>
            <person name="Goldsmith A.D."/>
            <person name="Gurjal M."/>
            <person name="Hansen N.F."/>
            <person name="Hayashizaki Y."/>
            <person name="Johnson-Hopson C."/>
            <person name="Hsuan V.W."/>
            <person name="Iida K."/>
            <person name="Karnes M."/>
            <person name="Khan S."/>
            <person name="Koesema E."/>
            <person name="Ishida J."/>
            <person name="Jiang P.X."/>
            <person name="Jones T."/>
            <person name="Kawai J."/>
            <person name="Kamiya A."/>
            <person name="Meyers C."/>
            <person name="Nakajima M."/>
            <person name="Narusaka M."/>
            <person name="Seki M."/>
            <person name="Sakurai T."/>
            <person name="Satou M."/>
            <person name="Tamse R."/>
            <person name="Vaysberg M."/>
            <person name="Wallender E.K."/>
            <person name="Wong C."/>
            <person name="Yamamura Y."/>
            <person name="Yuan S."/>
            <person name="Shinozaki K."/>
            <person name="Davis R.W."/>
            <person name="Theologis A."/>
            <person name="Ecker J.R."/>
        </authorList>
    </citation>
    <scope>NUCLEOTIDE SEQUENCE [LARGE SCALE MRNA]</scope>
    <source>
        <strain>cv. Columbia</strain>
    </source>
</reference>
<reference key="5">
    <citation type="submission" date="2002-03" db="EMBL/GenBank/DDBJ databases">
        <title>Full-length cDNA from Arabidopsis thaliana.</title>
        <authorList>
            <person name="Brover V.V."/>
            <person name="Troukhan M.E."/>
            <person name="Alexandrov N.A."/>
            <person name="Lu Y.-P."/>
            <person name="Flavell R.B."/>
            <person name="Feldmann K.A."/>
        </authorList>
    </citation>
    <scope>NUCLEOTIDE SEQUENCE [LARGE SCALE MRNA]</scope>
</reference>
<reference key="6">
    <citation type="journal article" date="2000" name="Plant Physiol.">
        <title>Integrated temporal regulation of the photorespiratory pathway. Circadian regulation of two Arabidopsis genes encoding serine hydroxymethyltransferase.</title>
        <authorList>
            <person name="McClung C.R."/>
            <person name="Hsu M."/>
            <person name="Painter J.E."/>
            <person name="Gagne J.M."/>
            <person name="Karlsberg S.D."/>
            <person name="Salome P.A."/>
        </authorList>
    </citation>
    <scope>GENE FAMILY</scope>
    <scope>NOMENCLATURE</scope>
    <scope>INDUCTION</scope>
    <scope>TISSUE SPECIFICITY</scope>
</reference>
<reference key="7">
    <citation type="journal article" date="2003" name="J. Exp. Bot.">
        <title>Genetic manipulation of glycine decarboxylation.</title>
        <authorList>
            <person name="Bauwe H."/>
            <person name="Kolukisaoglu U."/>
        </authorList>
    </citation>
    <scope>REVIEW</scope>
</reference>
<reference key="8">
    <citation type="journal article" date="2007" name="Mol. Cell. Proteomics">
        <title>Multidimensional protein identification technology (MudPIT) analysis of ubiquitinated proteins in plants.</title>
        <authorList>
            <person name="Maor R."/>
            <person name="Jones A."/>
            <person name="Nuehse T.S."/>
            <person name="Studholme D.J."/>
            <person name="Peck S.C."/>
            <person name="Shirasu K."/>
        </authorList>
    </citation>
    <scope>IDENTIFICATION BY MASS SPECTROMETRY [LARGE SCALE ANALYSIS]</scope>
    <source>
        <strain>cv. Landsberg erecta</strain>
    </source>
</reference>
<reference key="9">
    <citation type="journal article" date="2010" name="Biochem. J.">
        <title>One-carbon metabolism in plants: characterization of a plastid serine hydroxymethyltransferase.</title>
        <authorList>
            <person name="Zhang Y."/>
            <person name="Sun K."/>
            <person name="Sandoval F.J."/>
            <person name="Santiago K."/>
            <person name="Roje S."/>
        </authorList>
    </citation>
    <scope>GENE FAMILY</scope>
</reference>
<reference key="10">
    <citation type="journal article" date="2012" name="Mol. Cell. Proteomics">
        <title>Comparative large-scale characterisation of plant vs. mammal proteins reveals similar and idiosyncratic N-alpha acetylation features.</title>
        <authorList>
            <person name="Bienvenut W.V."/>
            <person name="Sumpton D."/>
            <person name="Martinez A."/>
            <person name="Lilla S."/>
            <person name="Espagne C."/>
            <person name="Meinnel T."/>
            <person name="Giglione C."/>
        </authorList>
    </citation>
    <scope>ACETYLATION [LARGE SCALE ANALYSIS] AT MET-1</scope>
    <scope>IDENTIFICATION BY MASS SPECTROMETRY [LARGE SCALE ANALYSIS]</scope>
</reference>
<reference key="11">
    <citation type="journal article" date="2012" name="Plant Cell">
        <title>Ubiquitin-specific protease16 modulates salt tolerance in Arabidopsis by regulating Na(+)/H(+) antiport activity and serine hydroxymethyltransferase stability.</title>
        <authorList>
            <person name="Zhou H."/>
            <person name="Zhao J."/>
            <person name="Yang Y."/>
            <person name="Chen C."/>
            <person name="Liu Y."/>
            <person name="Jin X."/>
            <person name="Chen L."/>
            <person name="Li X."/>
            <person name="Deng X.W."/>
            <person name="Schumaker K.S."/>
            <person name="Guo Y."/>
        </authorList>
    </citation>
    <scope>INTERACTION WITH UBP16</scope>
</reference>
<reference key="12">
    <citation type="journal article" date="2019" name="Sci. Rep.">
        <title>Structural basis of methotrexate and pemetrexed action on serine hydroxymethyltransferases revealed using plant models.</title>
        <authorList>
            <person name="Ruszkowski M."/>
            <person name="Sekula B."/>
            <person name="Ruszkowska A."/>
            <person name="Contestabile R."/>
            <person name="Nogues I."/>
            <person name="Angelaccio S."/>
            <person name="Szczepaniak A."/>
            <person name="Dauter Z."/>
        </authorList>
    </citation>
    <scope>X-RAY CRYSTALLOGRAPHY (2.12 ANGSTROMS) IN COMPLEX WITH THE ANTIFOLATES METHOTREXATE AND PEMETREXED</scope>
    <scope>FUNCTION</scope>
    <scope>CATALYTIC ACTIVITY</scope>
    <scope>COFACTOR</scope>
    <scope>ACTIVITY REGULATION</scope>
    <scope>BIOPHYSICOCHEMICAL PROPERTIES</scope>
    <scope>SUBUNIT</scope>
</reference>
<evidence type="ECO:0000250" key="1"/>
<evidence type="ECO:0000250" key="2">
    <source>
        <dbReference type="UniProtKB" id="Q94C74"/>
    </source>
</evidence>
<evidence type="ECO:0000269" key="3">
    <source>
    </source>
</evidence>
<evidence type="ECO:0000269" key="4">
    <source>
    </source>
</evidence>
<evidence type="ECO:0000269" key="5">
    <source>
    </source>
</evidence>
<evidence type="ECO:0000303" key="6">
    <source>
    </source>
</evidence>
<evidence type="ECO:0000303" key="7">
    <source>
    </source>
</evidence>
<evidence type="ECO:0000305" key="8"/>
<evidence type="ECO:0000312" key="9">
    <source>
        <dbReference type="Araport" id="AT4G13930"/>
    </source>
</evidence>
<evidence type="ECO:0000312" key="10">
    <source>
        <dbReference type="EMBL" id="CAB10172.1"/>
    </source>
</evidence>
<evidence type="ECO:0000312" key="11">
    <source>
        <dbReference type="EMBL" id="CAB78435.1"/>
    </source>
</evidence>
<evidence type="ECO:0007744" key="12">
    <source>
        <dbReference type="PDB" id="6SMR"/>
    </source>
</evidence>
<evidence type="ECO:0007744" key="13">
    <source>
    </source>
</evidence>
<evidence type="ECO:0007829" key="14">
    <source>
        <dbReference type="PDB" id="6SMR"/>
    </source>
</evidence>
<evidence type="ECO:0007829" key="15">
    <source>
        <dbReference type="PDB" id="7Q00"/>
    </source>
</evidence>
<proteinExistence type="evidence at protein level"/>
<accession>O23254</accession>
<accession>Q8LBY1</accession>
<accession>Q9FPJ3</accession>
<keyword id="KW-0002">3D-structure</keyword>
<keyword id="KW-0007">Acetylation</keyword>
<keyword id="KW-0963">Cytoplasm</keyword>
<keyword id="KW-0554">One-carbon metabolism</keyword>
<keyword id="KW-0663">Pyridoxal phosphate</keyword>
<keyword id="KW-1185">Reference proteome</keyword>
<keyword id="KW-0808">Transferase</keyword>
<protein>
    <recommendedName>
        <fullName evidence="6">Serine hydroxymethyltransferase 4</fullName>
        <shortName evidence="7">AtSHMT4</shortName>
        <ecNumber evidence="5">2.1.2.1</ecNumber>
    </recommendedName>
    <alternativeName>
        <fullName evidence="8">Glycine hydroxymethyltransferase 4</fullName>
    </alternativeName>
    <alternativeName>
        <fullName evidence="8">Serine methylase 4</fullName>
    </alternativeName>
</protein>
<dbReference type="EC" id="2.1.2.1" evidence="5"/>
<dbReference type="EMBL" id="Z97335">
    <property type="protein sequence ID" value="CAB10172.1"/>
    <property type="molecule type" value="Genomic_DNA"/>
</dbReference>
<dbReference type="EMBL" id="AL161537">
    <property type="protein sequence ID" value="CAB78435.1"/>
    <property type="molecule type" value="Genomic_DNA"/>
</dbReference>
<dbReference type="EMBL" id="CP002687">
    <property type="protein sequence ID" value="AEE83344.1"/>
    <property type="molecule type" value="Genomic_DNA"/>
</dbReference>
<dbReference type="EMBL" id="AF324991">
    <property type="protein sequence ID" value="AAG40343.1"/>
    <property type="molecule type" value="mRNA"/>
</dbReference>
<dbReference type="EMBL" id="AF361589">
    <property type="protein sequence ID" value="AAK32757.1"/>
    <property type="molecule type" value="mRNA"/>
</dbReference>
<dbReference type="EMBL" id="AY093987">
    <property type="protein sequence ID" value="AAM16248.1"/>
    <property type="molecule type" value="mRNA"/>
</dbReference>
<dbReference type="EMBL" id="AY086929">
    <property type="protein sequence ID" value="AAM64493.1"/>
    <property type="molecule type" value="mRNA"/>
</dbReference>
<dbReference type="PIR" id="B71400">
    <property type="entry name" value="B71400"/>
</dbReference>
<dbReference type="RefSeq" id="NP_193129.1">
    <property type="nucleotide sequence ID" value="NM_117467.4"/>
</dbReference>
<dbReference type="PDB" id="6SMR">
    <property type="method" value="X-ray"/>
    <property type="resolution" value="2.12 A"/>
    <property type="chains" value="A/B/C/D=1-471"/>
</dbReference>
<dbReference type="PDB" id="7Q00">
    <property type="method" value="X-ray"/>
    <property type="resolution" value="1.74 A"/>
    <property type="chains" value="A/B/C/D=1-471"/>
</dbReference>
<dbReference type="PDBsum" id="6SMR"/>
<dbReference type="PDBsum" id="7Q00"/>
<dbReference type="SMR" id="O23254"/>
<dbReference type="BioGRID" id="12324">
    <property type="interactions" value="5"/>
</dbReference>
<dbReference type="FunCoup" id="O23254">
    <property type="interactions" value="1317"/>
</dbReference>
<dbReference type="IntAct" id="O23254">
    <property type="interactions" value="3"/>
</dbReference>
<dbReference type="STRING" id="3702.O23254"/>
<dbReference type="iPTMnet" id="O23254"/>
<dbReference type="MetOSite" id="O23254"/>
<dbReference type="PaxDb" id="3702-AT4G13930.1"/>
<dbReference type="ProMEX" id="O23254"/>
<dbReference type="ProteomicsDB" id="248430"/>
<dbReference type="EnsemblPlants" id="AT4G13930.1">
    <property type="protein sequence ID" value="AT4G13930.1"/>
    <property type="gene ID" value="AT4G13930"/>
</dbReference>
<dbReference type="GeneID" id="827027"/>
<dbReference type="Gramene" id="AT4G13930.1">
    <property type="protein sequence ID" value="AT4G13930.1"/>
    <property type="gene ID" value="AT4G13930"/>
</dbReference>
<dbReference type="KEGG" id="ath:AT4G13930"/>
<dbReference type="Araport" id="AT4G13930"/>
<dbReference type="TAIR" id="AT4G13930">
    <property type="gene designation" value="SHM4"/>
</dbReference>
<dbReference type="eggNOG" id="KOG2467">
    <property type="taxonomic scope" value="Eukaryota"/>
</dbReference>
<dbReference type="HOGENOM" id="CLU_022477_0_0_1"/>
<dbReference type="InParanoid" id="O23254"/>
<dbReference type="OMA" id="VTNRNAI"/>
<dbReference type="OrthoDB" id="10265628at2759"/>
<dbReference type="PhylomeDB" id="O23254"/>
<dbReference type="BioCyc" id="ARA:AT4G13930-MONOMER"/>
<dbReference type="SABIO-RK" id="O23254"/>
<dbReference type="UniPathway" id="UPA00193"/>
<dbReference type="CD-CODE" id="4299E36E">
    <property type="entry name" value="Nucleolus"/>
</dbReference>
<dbReference type="PRO" id="PR:O23254"/>
<dbReference type="Proteomes" id="UP000006548">
    <property type="component" value="Chromosome 4"/>
</dbReference>
<dbReference type="ExpressionAtlas" id="O23254">
    <property type="expression patterns" value="baseline and differential"/>
</dbReference>
<dbReference type="GO" id="GO:0005829">
    <property type="term" value="C:cytosol"/>
    <property type="evidence" value="ECO:0007005"/>
    <property type="project" value="TAIR"/>
</dbReference>
<dbReference type="GO" id="GO:0005886">
    <property type="term" value="C:plasma membrane"/>
    <property type="evidence" value="ECO:0007005"/>
    <property type="project" value="TAIR"/>
</dbReference>
<dbReference type="GO" id="GO:0009506">
    <property type="term" value="C:plasmodesma"/>
    <property type="evidence" value="ECO:0007005"/>
    <property type="project" value="TAIR"/>
</dbReference>
<dbReference type="GO" id="GO:0004372">
    <property type="term" value="F:glycine hydroxymethyltransferase activity"/>
    <property type="evidence" value="ECO:0007669"/>
    <property type="project" value="UniProtKB-EC"/>
</dbReference>
<dbReference type="GO" id="GO:0030170">
    <property type="term" value="F:pyridoxal phosphate binding"/>
    <property type="evidence" value="ECO:0007669"/>
    <property type="project" value="InterPro"/>
</dbReference>
<dbReference type="GO" id="GO:1901149">
    <property type="term" value="F:salicylic acid binding"/>
    <property type="evidence" value="ECO:0007005"/>
    <property type="project" value="TAIR"/>
</dbReference>
<dbReference type="GO" id="GO:0007623">
    <property type="term" value="P:circadian rhythm"/>
    <property type="evidence" value="ECO:0000270"/>
    <property type="project" value="UniProtKB"/>
</dbReference>
<dbReference type="GO" id="GO:0019264">
    <property type="term" value="P:glycine biosynthetic process from serine"/>
    <property type="evidence" value="ECO:0007669"/>
    <property type="project" value="InterPro"/>
</dbReference>
<dbReference type="GO" id="GO:0035999">
    <property type="term" value="P:tetrahydrofolate interconversion"/>
    <property type="evidence" value="ECO:0007669"/>
    <property type="project" value="UniProtKB-UniPathway"/>
</dbReference>
<dbReference type="CDD" id="cd00378">
    <property type="entry name" value="SHMT"/>
    <property type="match status" value="1"/>
</dbReference>
<dbReference type="FunFam" id="3.40.640.10:FF:000050">
    <property type="entry name" value="Serine hydroxymethyltransferase"/>
    <property type="match status" value="1"/>
</dbReference>
<dbReference type="Gene3D" id="3.90.1150.10">
    <property type="entry name" value="Aspartate Aminotransferase, domain 1"/>
    <property type="match status" value="1"/>
</dbReference>
<dbReference type="Gene3D" id="3.40.640.10">
    <property type="entry name" value="Type I PLP-dependent aspartate aminotransferase-like (Major domain)"/>
    <property type="match status" value="1"/>
</dbReference>
<dbReference type="HAMAP" id="MF_00051">
    <property type="entry name" value="SHMT"/>
    <property type="match status" value="1"/>
</dbReference>
<dbReference type="InterPro" id="IPR015424">
    <property type="entry name" value="PyrdxlP-dep_Trfase"/>
</dbReference>
<dbReference type="InterPro" id="IPR015421">
    <property type="entry name" value="PyrdxlP-dep_Trfase_major"/>
</dbReference>
<dbReference type="InterPro" id="IPR015422">
    <property type="entry name" value="PyrdxlP-dep_Trfase_small"/>
</dbReference>
<dbReference type="InterPro" id="IPR001085">
    <property type="entry name" value="Ser_HO-MeTrfase"/>
</dbReference>
<dbReference type="InterPro" id="IPR049943">
    <property type="entry name" value="Ser_HO-MeTrfase-like"/>
</dbReference>
<dbReference type="InterPro" id="IPR019798">
    <property type="entry name" value="Ser_HO-MeTrfase_PLP_BS"/>
</dbReference>
<dbReference type="InterPro" id="IPR039429">
    <property type="entry name" value="SHMT-like_dom"/>
</dbReference>
<dbReference type="NCBIfam" id="NF000586">
    <property type="entry name" value="PRK00011.1"/>
    <property type="match status" value="1"/>
</dbReference>
<dbReference type="PANTHER" id="PTHR11680">
    <property type="entry name" value="SERINE HYDROXYMETHYLTRANSFERASE"/>
    <property type="match status" value="1"/>
</dbReference>
<dbReference type="PANTHER" id="PTHR11680:SF35">
    <property type="entry name" value="SERINE HYDROXYMETHYLTRANSFERASE 1"/>
    <property type="match status" value="1"/>
</dbReference>
<dbReference type="Pfam" id="PF00464">
    <property type="entry name" value="SHMT"/>
    <property type="match status" value="1"/>
</dbReference>
<dbReference type="PIRSF" id="PIRSF000412">
    <property type="entry name" value="SHMT"/>
    <property type="match status" value="1"/>
</dbReference>
<dbReference type="SUPFAM" id="SSF53383">
    <property type="entry name" value="PLP-dependent transferases"/>
    <property type="match status" value="1"/>
</dbReference>
<dbReference type="PROSITE" id="PS00096">
    <property type="entry name" value="SHMT"/>
    <property type="match status" value="1"/>
</dbReference>
<organism>
    <name type="scientific">Arabidopsis thaliana</name>
    <name type="common">Mouse-ear cress</name>
    <dbReference type="NCBI Taxonomy" id="3702"/>
    <lineage>
        <taxon>Eukaryota</taxon>
        <taxon>Viridiplantae</taxon>
        <taxon>Streptophyta</taxon>
        <taxon>Embryophyta</taxon>
        <taxon>Tracheophyta</taxon>
        <taxon>Spermatophyta</taxon>
        <taxon>Magnoliopsida</taxon>
        <taxon>eudicotyledons</taxon>
        <taxon>Gunneridae</taxon>
        <taxon>Pentapetalae</taxon>
        <taxon>rosids</taxon>
        <taxon>malvids</taxon>
        <taxon>Brassicales</taxon>
        <taxon>Brassicaceae</taxon>
        <taxon>Camelineae</taxon>
        <taxon>Arabidopsis</taxon>
    </lineage>
</organism>